<proteinExistence type="predicted"/>
<organism>
    <name type="scientific">Spirochaeta aurantia</name>
    <dbReference type="NCBI Taxonomy" id="147"/>
    <lineage>
        <taxon>Bacteria</taxon>
        <taxon>Pseudomonadati</taxon>
        <taxon>Spirochaetota</taxon>
        <taxon>Spirochaetia</taxon>
        <taxon>Spirochaetales</taxon>
        <taxon>Spirochaetaceae</taxon>
        <taxon>Spirochaeta</taxon>
    </lineage>
</organism>
<reference key="1">
    <citation type="journal article" date="1991" name="J. Bacteriol.">
        <title>Nucleotide sequence and analysis of a gene encoding anthranilate synthase component I in Spirochaeta aurantia.</title>
        <authorList>
            <person name="Brahamsha B."/>
            <person name="Han C.Y."/>
            <person name="Crawford I.P."/>
            <person name="Greenberg E.P."/>
        </authorList>
    </citation>
    <scope>NUCLEOTIDE SEQUENCE [GENOMIC DNA]</scope>
</reference>
<sequence length="140" mass="15504">MVMDHDINGNGKFDDKELPGLKKGYFDNLKSYQYFTHLRLGTKKLEVPSPTKFVASIADGRVTFRFFVPLGLRLDAKTPLAVAFYDDTFFTDMVFNKSGPVALKVTDGGKGSVALRASPSLSYYSGQVVPTYAFITWSPS</sequence>
<accession>P22041</accession>
<protein>
    <recommendedName>
        <fullName>Uncharacterized 15.5 kDa protein in trpE 3'region</fullName>
    </recommendedName>
    <alternativeName>
        <fullName>ORF 1</fullName>
    </alternativeName>
</protein>
<dbReference type="EMBL" id="M55917">
    <property type="protein sequence ID" value="AAA26590.1"/>
    <property type="molecule type" value="Genomic_DNA"/>
</dbReference>
<dbReference type="InterPro" id="IPR010412">
    <property type="entry name" value="DUF1007"/>
</dbReference>
<dbReference type="Pfam" id="PF06226">
    <property type="entry name" value="DUF1007"/>
    <property type="match status" value="1"/>
</dbReference>
<feature type="chain" id="PRO_0000066531" description="Uncharacterized 15.5 kDa protein in trpE 3'region">
    <location>
        <begin position="1"/>
        <end position="140"/>
    </location>
</feature>
<name>YTR1_SPIAU</name>